<dbReference type="EC" id="6.3.4.24" evidence="1"/>
<dbReference type="EMBL" id="L77117">
    <property type="protein sequence ID" value="AAB98814.1"/>
    <property type="molecule type" value="Genomic_DNA"/>
</dbReference>
<dbReference type="PIR" id="G64401">
    <property type="entry name" value="G64401"/>
</dbReference>
<dbReference type="SMR" id="Q58225"/>
<dbReference type="FunCoup" id="Q58225">
    <property type="interactions" value="110"/>
</dbReference>
<dbReference type="STRING" id="243232.MJ_0815"/>
<dbReference type="PaxDb" id="243232-MJ_0815"/>
<dbReference type="EnsemblBacteria" id="AAB98814">
    <property type="protein sequence ID" value="AAB98814"/>
    <property type="gene ID" value="MJ_0815"/>
</dbReference>
<dbReference type="KEGG" id="mja:MJ_0815"/>
<dbReference type="eggNOG" id="arCOG01592">
    <property type="taxonomic scope" value="Archaea"/>
</dbReference>
<dbReference type="HOGENOM" id="CLU_059501_1_1_2"/>
<dbReference type="InParanoid" id="Q58225"/>
<dbReference type="PhylomeDB" id="Q58225"/>
<dbReference type="UniPathway" id="UPA00080"/>
<dbReference type="Proteomes" id="UP000000805">
    <property type="component" value="Chromosome"/>
</dbReference>
<dbReference type="GO" id="GO:0005524">
    <property type="term" value="F:ATP binding"/>
    <property type="evidence" value="ECO:0007669"/>
    <property type="project" value="UniProtKB-KW"/>
</dbReference>
<dbReference type="GO" id="GO:0016874">
    <property type="term" value="F:ligase activity"/>
    <property type="evidence" value="ECO:0007669"/>
    <property type="project" value="UniProtKB-KW"/>
</dbReference>
<dbReference type="GO" id="GO:0046872">
    <property type="term" value="F:metal ion binding"/>
    <property type="evidence" value="ECO:0007669"/>
    <property type="project" value="UniProtKB-KW"/>
</dbReference>
<dbReference type="Gene3D" id="2.30.36.100">
    <property type="match status" value="1"/>
</dbReference>
<dbReference type="Gene3D" id="3.40.50.11770">
    <property type="match status" value="1"/>
</dbReference>
<dbReference type="Gene3D" id="3.30.470.20">
    <property type="entry name" value="ATP-grasp fold, B domain"/>
    <property type="match status" value="1"/>
</dbReference>
<dbReference type="InterPro" id="IPR011761">
    <property type="entry name" value="ATP-grasp"/>
</dbReference>
<dbReference type="InterPro" id="IPR003806">
    <property type="entry name" value="ATP-grasp_PylC-type"/>
</dbReference>
<dbReference type="InterPro" id="IPR024710">
    <property type="entry name" value="MfnD"/>
</dbReference>
<dbReference type="InterPro" id="IPR040803">
    <property type="entry name" value="MfnD_preATP-grasp"/>
</dbReference>
<dbReference type="InterPro" id="IPR053510">
    <property type="entry name" value="Tyramine-Glutamate_Synthase"/>
</dbReference>
<dbReference type="NCBIfam" id="NF040722">
    <property type="entry name" value="MfnD_Meth"/>
    <property type="match status" value="1"/>
</dbReference>
<dbReference type="Pfam" id="PF02655">
    <property type="entry name" value="ATP-grasp_3"/>
    <property type="match status" value="1"/>
</dbReference>
<dbReference type="Pfam" id="PF18301">
    <property type="entry name" value="preATP-grasp_3"/>
    <property type="match status" value="1"/>
</dbReference>
<dbReference type="PIRSF" id="PIRSF016766">
    <property type="entry name" value="UCP016766_ATPgrasp"/>
    <property type="match status" value="1"/>
</dbReference>
<dbReference type="SUPFAM" id="SSF56059">
    <property type="entry name" value="Glutathione synthetase ATP-binding domain-like"/>
    <property type="match status" value="1"/>
</dbReference>
<dbReference type="PROSITE" id="PS50975">
    <property type="entry name" value="ATP_GRASP"/>
    <property type="match status" value="1"/>
</dbReference>
<gene>
    <name type="primary">mfnD</name>
    <name type="ordered locus">MJ0815</name>
</gene>
<evidence type="ECO:0000250" key="1">
    <source>
        <dbReference type="UniProtKB" id="C7P8V7"/>
    </source>
</evidence>
<evidence type="ECO:0000255" key="2">
    <source>
        <dbReference type="PROSITE-ProRule" id="PRU00409"/>
    </source>
</evidence>
<comment type="function">
    <text evidence="1">Catalyzes the formation of an amide bond between tyramine and the gamma carboxy group of L-glutamate. The enzyme also accepts phenylethylamine in vitro.</text>
</comment>
<comment type="catalytic activity">
    <reaction evidence="1">
        <text>tyramine + L-glutamate + ATP = gamma-L-glutamyltyramine + ADP + phosphate + H(+)</text>
        <dbReference type="Rhea" id="RHEA:43544"/>
        <dbReference type="ChEBI" id="CHEBI:15378"/>
        <dbReference type="ChEBI" id="CHEBI:29985"/>
        <dbReference type="ChEBI" id="CHEBI:30616"/>
        <dbReference type="ChEBI" id="CHEBI:43474"/>
        <dbReference type="ChEBI" id="CHEBI:83425"/>
        <dbReference type="ChEBI" id="CHEBI:327995"/>
        <dbReference type="ChEBI" id="CHEBI:456216"/>
        <dbReference type="EC" id="6.3.4.24"/>
    </reaction>
</comment>
<comment type="cofactor">
    <cofactor evidence="1">
        <name>Mg(2+)</name>
        <dbReference type="ChEBI" id="CHEBI:18420"/>
    </cofactor>
    <cofactor evidence="1">
        <name>Mn(2+)</name>
        <dbReference type="ChEBI" id="CHEBI:29035"/>
    </cofactor>
    <text evidence="2">Binds 2 magnesium or manganese ions per subunit.</text>
</comment>
<comment type="pathway">
    <text evidence="1">Cofactor biosynthesis; methanofuran biosynthesis.</text>
</comment>
<proteinExistence type="inferred from homology"/>
<feature type="chain" id="PRO_0000013998" description="Tyramine--L-glutamate ligase">
    <location>
        <begin position="1"/>
        <end position="308"/>
    </location>
</feature>
<feature type="domain" description="ATP-grasp" evidence="2">
    <location>
        <begin position="89"/>
        <end position="291"/>
    </location>
</feature>
<feature type="binding site" evidence="2">
    <location>
        <begin position="115"/>
        <end position="192"/>
    </location>
    <ligand>
        <name>ATP</name>
        <dbReference type="ChEBI" id="CHEBI:30616"/>
    </ligand>
</feature>
<feature type="binding site" evidence="2">
    <location>
        <position position="252"/>
    </location>
    <ligand>
        <name>Mg(2+)</name>
        <dbReference type="ChEBI" id="CHEBI:18420"/>
        <label>1</label>
    </ligand>
</feature>
<feature type="binding site" evidence="2">
    <location>
        <position position="252"/>
    </location>
    <ligand>
        <name>Mn(2+)</name>
        <dbReference type="ChEBI" id="CHEBI:29035"/>
        <label>1</label>
    </ligand>
</feature>
<feature type="binding site" evidence="2">
    <location>
        <position position="264"/>
    </location>
    <ligand>
        <name>Mg(2+)</name>
        <dbReference type="ChEBI" id="CHEBI:18420"/>
        <label>1</label>
    </ligand>
</feature>
<feature type="binding site" evidence="2">
    <location>
        <position position="264"/>
    </location>
    <ligand>
        <name>Mg(2+)</name>
        <dbReference type="ChEBI" id="CHEBI:18420"/>
        <label>2</label>
    </ligand>
</feature>
<feature type="binding site" evidence="2">
    <location>
        <position position="264"/>
    </location>
    <ligand>
        <name>Mn(2+)</name>
        <dbReference type="ChEBI" id="CHEBI:29035"/>
        <label>1</label>
    </ligand>
</feature>
<feature type="binding site" evidence="2">
    <location>
        <position position="264"/>
    </location>
    <ligand>
        <name>Mn(2+)</name>
        <dbReference type="ChEBI" id="CHEBI:29035"/>
        <label>2</label>
    </ligand>
</feature>
<feature type="binding site" evidence="2">
    <location>
        <position position="266"/>
    </location>
    <ligand>
        <name>Mg(2+)</name>
        <dbReference type="ChEBI" id="CHEBI:18420"/>
        <label>2</label>
    </ligand>
</feature>
<feature type="binding site" evidence="2">
    <location>
        <position position="266"/>
    </location>
    <ligand>
        <name>Mn(2+)</name>
        <dbReference type="ChEBI" id="CHEBI:29035"/>
        <label>2</label>
    </ligand>
</feature>
<accession>Q58225</accession>
<reference key="1">
    <citation type="journal article" date="1996" name="Science">
        <title>Complete genome sequence of the methanogenic archaeon, Methanococcus jannaschii.</title>
        <authorList>
            <person name="Bult C.J."/>
            <person name="White O."/>
            <person name="Olsen G.J."/>
            <person name="Zhou L."/>
            <person name="Fleischmann R.D."/>
            <person name="Sutton G.G."/>
            <person name="Blake J.A."/>
            <person name="FitzGerald L.M."/>
            <person name="Clayton R.A."/>
            <person name="Gocayne J.D."/>
            <person name="Kerlavage A.R."/>
            <person name="Dougherty B.A."/>
            <person name="Tomb J.-F."/>
            <person name="Adams M.D."/>
            <person name="Reich C.I."/>
            <person name="Overbeek R."/>
            <person name="Kirkness E.F."/>
            <person name="Weinstock K.G."/>
            <person name="Merrick J.M."/>
            <person name="Glodek A."/>
            <person name="Scott J.L."/>
            <person name="Geoghagen N.S.M."/>
            <person name="Weidman J.F."/>
            <person name="Fuhrmann J.L."/>
            <person name="Nguyen D."/>
            <person name="Utterback T.R."/>
            <person name="Kelley J.M."/>
            <person name="Peterson J.D."/>
            <person name="Sadow P.W."/>
            <person name="Hanna M.C."/>
            <person name="Cotton M.D."/>
            <person name="Roberts K.M."/>
            <person name="Hurst M.A."/>
            <person name="Kaine B.P."/>
            <person name="Borodovsky M."/>
            <person name="Klenk H.-P."/>
            <person name="Fraser C.M."/>
            <person name="Smith H.O."/>
            <person name="Woese C.R."/>
            <person name="Venter J.C."/>
        </authorList>
    </citation>
    <scope>NUCLEOTIDE SEQUENCE [LARGE SCALE GENOMIC DNA]</scope>
    <source>
        <strain>ATCC 43067 / DSM 2661 / JAL-1 / JCM 10045 / NBRC 100440</strain>
    </source>
</reference>
<organism>
    <name type="scientific">Methanocaldococcus jannaschii (strain ATCC 43067 / DSM 2661 / JAL-1 / JCM 10045 / NBRC 100440)</name>
    <name type="common">Methanococcus jannaschii</name>
    <dbReference type="NCBI Taxonomy" id="243232"/>
    <lineage>
        <taxon>Archaea</taxon>
        <taxon>Methanobacteriati</taxon>
        <taxon>Methanobacteriota</taxon>
        <taxon>Methanomada group</taxon>
        <taxon>Methanococci</taxon>
        <taxon>Methanococcales</taxon>
        <taxon>Methanocaldococcaceae</taxon>
        <taxon>Methanocaldococcus</taxon>
    </lineage>
</organism>
<protein>
    <recommendedName>
        <fullName>Tyramine--L-glutamate ligase</fullName>
        <ecNumber evidence="1">6.3.4.24</ecNumber>
    </recommendedName>
</protein>
<name>MFND_METJA</name>
<sequence length="308" mass="35061">MLLLQSILITKIMVIQLILFFEYALASGFEDKNILKEGKMMFDTLLKQFLEIDKVISLLYKDFVDNYIDFKNLEIVKIKKENEIENKLKSLLKSENIDYALVVAPEDEDILYNLTKIIESYPVKNLGCSSEAIKIAGNKYLTYLAIKDAVKTPKTFPPKKYVVKKIDSCGGKFNLFDENFLIQEFIDGENLSVSLIVGKKIHPLSLNRQYIDKRGFVGGEVNINHKLKDKIFNEAIKAVKCINGLNGYVGVDVIVNNDGIYIIEINPRITTTIYGLKTNPSLAELLIKNANNEELKFKVKGEKFTIDK</sequence>
<keyword id="KW-0067">ATP-binding</keyword>
<keyword id="KW-0436">Ligase</keyword>
<keyword id="KW-0460">Magnesium</keyword>
<keyword id="KW-0464">Manganese</keyword>
<keyword id="KW-0479">Metal-binding</keyword>
<keyword id="KW-0547">Nucleotide-binding</keyword>
<keyword id="KW-1185">Reference proteome</keyword>